<proteinExistence type="evidence at protein level"/>
<evidence type="ECO:0000250" key="1">
    <source>
        <dbReference type="UniProtKB" id="P34405"/>
    </source>
</evidence>
<evidence type="ECO:0000255" key="2"/>
<evidence type="ECO:0000269" key="3">
    <source>
    </source>
</evidence>
<evidence type="ECO:0000303" key="4">
    <source>
    </source>
</evidence>
<evidence type="ECO:0000305" key="5"/>
<evidence type="ECO:0000305" key="6">
    <source>
    </source>
</evidence>
<protein>
    <recommendedName>
        <fullName evidence="4">Extended FMRFamide-3</fullName>
        <shortName evidence="4">FMRFa-3</shortName>
    </recommendedName>
</protein>
<reference evidence="5" key="1">
    <citation type="journal article" date="2012" name="Syst. Biol.">
        <title>Peptidomics-based phylogeny and biogeography of Mantophasmatodea (Hexapoda).</title>
        <authorList>
            <person name="Predel R."/>
            <person name="Neupert S."/>
            <person name="Huetteroth W."/>
            <person name="Kahnt J."/>
            <person name="Waidelich D."/>
            <person name="Roth S."/>
        </authorList>
    </citation>
    <scope>PROTEIN SEQUENCE</scope>
    <scope>AMIDATION AT LEU-9</scope>
    <source>
        <tissue evidence="3">Thoracic perisympathetic organs</tissue>
    </source>
</reference>
<comment type="function">
    <text evidence="1">FMRFamides and FMRFamide-like peptides are neuropeptides.</text>
</comment>
<comment type="subcellular location">
    <subcellularLocation>
        <location evidence="6">Secreted</location>
    </subcellularLocation>
</comment>
<comment type="similarity">
    <text evidence="2">Belongs to the FARP (FMRF amide related peptide) family.</text>
</comment>
<dbReference type="GO" id="GO:0005576">
    <property type="term" value="C:extracellular region"/>
    <property type="evidence" value="ECO:0007669"/>
    <property type="project" value="UniProtKB-SubCell"/>
</dbReference>
<dbReference type="GO" id="GO:0007218">
    <property type="term" value="P:neuropeptide signaling pathway"/>
    <property type="evidence" value="ECO:0007669"/>
    <property type="project" value="UniProtKB-KW"/>
</dbReference>
<feature type="peptide" id="PRO_0000421501" description="Extended FMRFamide-3" evidence="3">
    <location>
        <begin position="1"/>
        <end position="9"/>
    </location>
</feature>
<feature type="modified residue" description="Leucine amide" evidence="3">
    <location>
        <position position="9"/>
    </location>
</feature>
<feature type="unsure residue" description="L or I" evidence="3">
    <location>
        <position position="9"/>
    </location>
</feature>
<keyword id="KW-0027">Amidation</keyword>
<keyword id="KW-0903">Direct protein sequencing</keyword>
<keyword id="KW-0527">Neuropeptide</keyword>
<keyword id="KW-0964">Secreted</keyword>
<sequence length="9" mass="1037">GPETAFFRL</sequence>
<accession>B3A0H8</accession>
<name>FAR3_TYRGL</name>
<organism>
    <name type="scientific">Tyrannophasma gladiator</name>
    <name type="common">Gladiator</name>
    <name type="synonym">Heel-walker</name>
    <dbReference type="NCBI Taxonomy" id="270861"/>
    <lineage>
        <taxon>Eukaryota</taxon>
        <taxon>Metazoa</taxon>
        <taxon>Ecdysozoa</taxon>
        <taxon>Arthropoda</taxon>
        <taxon>Hexapoda</taxon>
        <taxon>Insecta</taxon>
        <taxon>Pterygota</taxon>
        <taxon>Neoptera</taxon>
        <taxon>Polyneoptera</taxon>
        <taxon>Mantophasmatodea</taxon>
        <taxon>Mantophasmatodea incertae sedis</taxon>
        <taxon>Tyrannophasma</taxon>
    </lineage>
</organism>